<evidence type="ECO:0000255" key="1">
    <source>
        <dbReference type="HAMAP-Rule" id="MF_00120"/>
    </source>
</evidence>
<dbReference type="EC" id="6.3.5.7" evidence="1"/>
<dbReference type="EMBL" id="CP000551">
    <property type="protein sequence ID" value="ABM70198.1"/>
    <property type="molecule type" value="Genomic_DNA"/>
</dbReference>
<dbReference type="RefSeq" id="WP_011818354.1">
    <property type="nucleotide sequence ID" value="NC_008816.1"/>
</dbReference>
<dbReference type="SMR" id="A2BQY7"/>
<dbReference type="STRING" id="146891.A9601_09141"/>
<dbReference type="KEGG" id="pmb:A9601_09141"/>
<dbReference type="eggNOG" id="COG0154">
    <property type="taxonomic scope" value="Bacteria"/>
</dbReference>
<dbReference type="HOGENOM" id="CLU_009600_0_3_3"/>
<dbReference type="OrthoDB" id="9811471at2"/>
<dbReference type="Proteomes" id="UP000002590">
    <property type="component" value="Chromosome"/>
</dbReference>
<dbReference type="GO" id="GO:0030956">
    <property type="term" value="C:glutamyl-tRNA(Gln) amidotransferase complex"/>
    <property type="evidence" value="ECO:0007669"/>
    <property type="project" value="InterPro"/>
</dbReference>
<dbReference type="GO" id="GO:0005524">
    <property type="term" value="F:ATP binding"/>
    <property type="evidence" value="ECO:0007669"/>
    <property type="project" value="UniProtKB-KW"/>
</dbReference>
<dbReference type="GO" id="GO:0050567">
    <property type="term" value="F:glutaminyl-tRNA synthase (glutamine-hydrolyzing) activity"/>
    <property type="evidence" value="ECO:0007669"/>
    <property type="project" value="UniProtKB-UniRule"/>
</dbReference>
<dbReference type="GO" id="GO:0006412">
    <property type="term" value="P:translation"/>
    <property type="evidence" value="ECO:0007669"/>
    <property type="project" value="UniProtKB-UniRule"/>
</dbReference>
<dbReference type="Gene3D" id="3.90.1300.10">
    <property type="entry name" value="Amidase signature (AS) domain"/>
    <property type="match status" value="1"/>
</dbReference>
<dbReference type="HAMAP" id="MF_00120">
    <property type="entry name" value="GatA"/>
    <property type="match status" value="1"/>
</dbReference>
<dbReference type="InterPro" id="IPR000120">
    <property type="entry name" value="Amidase"/>
</dbReference>
<dbReference type="InterPro" id="IPR020556">
    <property type="entry name" value="Amidase_CS"/>
</dbReference>
<dbReference type="InterPro" id="IPR023631">
    <property type="entry name" value="Amidase_dom"/>
</dbReference>
<dbReference type="InterPro" id="IPR036928">
    <property type="entry name" value="AS_sf"/>
</dbReference>
<dbReference type="InterPro" id="IPR004412">
    <property type="entry name" value="GatA"/>
</dbReference>
<dbReference type="NCBIfam" id="TIGR00132">
    <property type="entry name" value="gatA"/>
    <property type="match status" value="1"/>
</dbReference>
<dbReference type="PANTHER" id="PTHR11895:SF151">
    <property type="entry name" value="GLUTAMYL-TRNA(GLN) AMIDOTRANSFERASE SUBUNIT A"/>
    <property type="match status" value="1"/>
</dbReference>
<dbReference type="PANTHER" id="PTHR11895">
    <property type="entry name" value="TRANSAMIDASE"/>
    <property type="match status" value="1"/>
</dbReference>
<dbReference type="Pfam" id="PF01425">
    <property type="entry name" value="Amidase"/>
    <property type="match status" value="1"/>
</dbReference>
<dbReference type="SUPFAM" id="SSF75304">
    <property type="entry name" value="Amidase signature (AS) enzymes"/>
    <property type="match status" value="1"/>
</dbReference>
<dbReference type="PROSITE" id="PS00571">
    <property type="entry name" value="AMIDASES"/>
    <property type="match status" value="1"/>
</dbReference>
<sequence>MNFNSLRKEITSNNASVKELVNDFFVKIDHKDSKINSYICTTKDNAIAQAEDIDKLIQNNEKLPPLAGMPIAIKDNICTKGVATTCASNMLKNFVAPYESTASSKLWSSGGICLGKTNLDEFAMGSSTETSVFGVTSNPWDINRVPGGSSGGSAASVAAGFCAAAIGSDTGGSIRQPASFCGVVGLKPTYGRVSRWGLVAFASSLDQIGPITNTVSDAAEILHSISGKDPFDSTCLDKPVPNYLTDLNKSIKGLKIGIIKECFEHPGLNPEVKESVLSGVDRFQALGAEIIEVECPRFNDGIATYYVIAPSEASANLARYDGVKYGYRSNEGSNLIDMTSKSRAEGFGDEVQRRILIGTYALSAGYSDAYYKKAQKVRTLIRKDFDNAFKKVDVLLTPTCPTTAFLKGDFVNDPLSMYLSDLLTVPANLAGLPAISIPCGFDTKGLPIGLQLIGNVLEEDRILNAANIFEIDAHVIKKRPLF</sequence>
<proteinExistence type="inferred from homology"/>
<comment type="function">
    <text evidence="1">Allows the formation of correctly charged Gln-tRNA(Gln) through the transamidation of misacylated Glu-tRNA(Gln) in organisms which lack glutaminyl-tRNA synthetase. The reaction takes place in the presence of glutamine and ATP through an activated gamma-phospho-Glu-tRNA(Gln).</text>
</comment>
<comment type="catalytic activity">
    <reaction evidence="1">
        <text>L-glutamyl-tRNA(Gln) + L-glutamine + ATP + H2O = L-glutaminyl-tRNA(Gln) + L-glutamate + ADP + phosphate + H(+)</text>
        <dbReference type="Rhea" id="RHEA:17521"/>
        <dbReference type="Rhea" id="RHEA-COMP:9681"/>
        <dbReference type="Rhea" id="RHEA-COMP:9684"/>
        <dbReference type="ChEBI" id="CHEBI:15377"/>
        <dbReference type="ChEBI" id="CHEBI:15378"/>
        <dbReference type="ChEBI" id="CHEBI:29985"/>
        <dbReference type="ChEBI" id="CHEBI:30616"/>
        <dbReference type="ChEBI" id="CHEBI:43474"/>
        <dbReference type="ChEBI" id="CHEBI:58359"/>
        <dbReference type="ChEBI" id="CHEBI:78520"/>
        <dbReference type="ChEBI" id="CHEBI:78521"/>
        <dbReference type="ChEBI" id="CHEBI:456216"/>
        <dbReference type="EC" id="6.3.5.7"/>
    </reaction>
</comment>
<comment type="subunit">
    <text evidence="1">Heterotrimer of A, B and C subunits.</text>
</comment>
<comment type="similarity">
    <text evidence="1">Belongs to the amidase family. GatA subfamily.</text>
</comment>
<protein>
    <recommendedName>
        <fullName evidence="1">Glutamyl-tRNA(Gln) amidotransferase subunit A</fullName>
        <shortName evidence="1">Glu-ADT subunit A</shortName>
        <ecNumber evidence="1">6.3.5.7</ecNumber>
    </recommendedName>
</protein>
<reference key="1">
    <citation type="journal article" date="2007" name="PLoS Genet.">
        <title>Patterns and implications of gene gain and loss in the evolution of Prochlorococcus.</title>
        <authorList>
            <person name="Kettler G.C."/>
            <person name="Martiny A.C."/>
            <person name="Huang K."/>
            <person name="Zucker J."/>
            <person name="Coleman M.L."/>
            <person name="Rodrigue S."/>
            <person name="Chen F."/>
            <person name="Lapidus A."/>
            <person name="Ferriera S."/>
            <person name="Johnson J."/>
            <person name="Steglich C."/>
            <person name="Church G.M."/>
            <person name="Richardson P."/>
            <person name="Chisholm S.W."/>
        </authorList>
    </citation>
    <scope>NUCLEOTIDE SEQUENCE [LARGE SCALE GENOMIC DNA]</scope>
    <source>
        <strain>AS9601</strain>
    </source>
</reference>
<feature type="chain" id="PRO_1000015884" description="Glutamyl-tRNA(Gln) amidotransferase subunit A">
    <location>
        <begin position="1"/>
        <end position="482"/>
    </location>
</feature>
<feature type="active site" description="Charge relay system" evidence="1">
    <location>
        <position position="74"/>
    </location>
</feature>
<feature type="active site" description="Charge relay system" evidence="1">
    <location>
        <position position="149"/>
    </location>
</feature>
<feature type="active site" description="Acyl-ester intermediate" evidence="1">
    <location>
        <position position="173"/>
    </location>
</feature>
<accession>A2BQY7</accession>
<gene>
    <name evidence="1" type="primary">gatA</name>
    <name type="ordered locus">A9601_09141</name>
</gene>
<name>GATA_PROMS</name>
<organism>
    <name type="scientific">Prochlorococcus marinus (strain AS9601)</name>
    <dbReference type="NCBI Taxonomy" id="146891"/>
    <lineage>
        <taxon>Bacteria</taxon>
        <taxon>Bacillati</taxon>
        <taxon>Cyanobacteriota</taxon>
        <taxon>Cyanophyceae</taxon>
        <taxon>Synechococcales</taxon>
        <taxon>Prochlorococcaceae</taxon>
        <taxon>Prochlorococcus</taxon>
    </lineage>
</organism>
<keyword id="KW-0067">ATP-binding</keyword>
<keyword id="KW-0436">Ligase</keyword>
<keyword id="KW-0547">Nucleotide-binding</keyword>
<keyword id="KW-0648">Protein biosynthesis</keyword>